<comment type="function">
    <text evidence="2">Cell wall formation.</text>
</comment>
<comment type="catalytic activity">
    <reaction evidence="2">
        <text>2 D-alanine + ATP = D-alanyl-D-alanine + ADP + phosphate + H(+)</text>
        <dbReference type="Rhea" id="RHEA:11224"/>
        <dbReference type="ChEBI" id="CHEBI:15378"/>
        <dbReference type="ChEBI" id="CHEBI:30616"/>
        <dbReference type="ChEBI" id="CHEBI:43474"/>
        <dbReference type="ChEBI" id="CHEBI:57416"/>
        <dbReference type="ChEBI" id="CHEBI:57822"/>
        <dbReference type="ChEBI" id="CHEBI:456216"/>
        <dbReference type="EC" id="6.3.2.4"/>
    </reaction>
</comment>
<comment type="cofactor">
    <cofactor evidence="1">
        <name>Mg(2+)</name>
        <dbReference type="ChEBI" id="CHEBI:18420"/>
    </cofactor>
    <cofactor evidence="1">
        <name>Mn(2+)</name>
        <dbReference type="ChEBI" id="CHEBI:29035"/>
    </cofactor>
    <text evidence="1">Binds 2 magnesium or manganese ions per subunit.</text>
</comment>
<comment type="pathway">
    <text evidence="2">Cell wall biogenesis; peptidoglycan biosynthesis.</text>
</comment>
<comment type="subcellular location">
    <subcellularLocation>
        <location evidence="2">Cytoplasm</location>
    </subcellularLocation>
</comment>
<comment type="similarity">
    <text evidence="2">Belongs to the D-alanine--D-alanine ligase family.</text>
</comment>
<gene>
    <name evidence="2" type="primary">ddl</name>
    <name type="ordered locus">Hac_0681</name>
</gene>
<name>DDL_HELAH</name>
<sequence>MVEFCVLFGGASFEHEISIVSAIALKEVLKDQIKYFIFLDENHHFYLIEASNMHSKYFAQIKEKKLPPLMLTHNGLLKNSFLGAKTIELPLMINLVHGGDGEDGKLASLLEFYRIAFIGSRVEASVLSYNKHLTKLYAKNLGVKTLDCILLNEKNRANALDLIKPSFNFPFIVKPNNAGSSLGVSVVKEEKELAYALDGAFEYSKEVLIEPFIQRVKEYNLAGCKIKEDFCFSYVEEPNKQEFLDFKQKYLDFSRTKAPKANIPNALEEQLRENFKKLYNDLFDGAIIRCDFFVIDNEVYLNEINPIPGSLANYLFDDFKTTLENLAQSLPKTPKIQVKNSYLLQIQKNK</sequence>
<reference key="1">
    <citation type="journal article" date="2006" name="PLoS Genet.">
        <title>Who ate whom? Adaptive Helicobacter genomic changes that accompanied a host jump from early humans to large felines.</title>
        <authorList>
            <person name="Eppinger M."/>
            <person name="Baar C."/>
            <person name="Linz B."/>
            <person name="Raddatz G."/>
            <person name="Lanz C."/>
            <person name="Keller H."/>
            <person name="Morelli G."/>
            <person name="Gressmann H."/>
            <person name="Achtman M."/>
            <person name="Schuster S.C."/>
        </authorList>
    </citation>
    <scope>NUCLEOTIDE SEQUENCE [LARGE SCALE GENOMIC DNA]</scope>
    <source>
        <strain>Sheeba</strain>
    </source>
</reference>
<organism>
    <name type="scientific">Helicobacter acinonychis (strain Sheeba)</name>
    <dbReference type="NCBI Taxonomy" id="382638"/>
    <lineage>
        <taxon>Bacteria</taxon>
        <taxon>Pseudomonadati</taxon>
        <taxon>Campylobacterota</taxon>
        <taxon>Epsilonproteobacteria</taxon>
        <taxon>Campylobacterales</taxon>
        <taxon>Helicobacteraceae</taxon>
        <taxon>Helicobacter</taxon>
    </lineage>
</organism>
<proteinExistence type="inferred from homology"/>
<dbReference type="EC" id="6.3.2.4" evidence="2"/>
<dbReference type="EMBL" id="AM260522">
    <property type="protein sequence ID" value="CAJ99485.1"/>
    <property type="molecule type" value="Genomic_DNA"/>
</dbReference>
<dbReference type="SMR" id="Q17XZ1"/>
<dbReference type="STRING" id="382638.Hac_0681"/>
<dbReference type="KEGG" id="hac:Hac_0681"/>
<dbReference type="eggNOG" id="COG1181">
    <property type="taxonomic scope" value="Bacteria"/>
</dbReference>
<dbReference type="HOGENOM" id="CLU_039268_0_2_7"/>
<dbReference type="UniPathway" id="UPA00219"/>
<dbReference type="Proteomes" id="UP000000775">
    <property type="component" value="Chromosome"/>
</dbReference>
<dbReference type="GO" id="GO:0005737">
    <property type="term" value="C:cytoplasm"/>
    <property type="evidence" value="ECO:0007669"/>
    <property type="project" value="UniProtKB-SubCell"/>
</dbReference>
<dbReference type="GO" id="GO:0005524">
    <property type="term" value="F:ATP binding"/>
    <property type="evidence" value="ECO:0007669"/>
    <property type="project" value="UniProtKB-KW"/>
</dbReference>
<dbReference type="GO" id="GO:0008716">
    <property type="term" value="F:D-alanine-D-alanine ligase activity"/>
    <property type="evidence" value="ECO:0007669"/>
    <property type="project" value="UniProtKB-UniRule"/>
</dbReference>
<dbReference type="GO" id="GO:0046872">
    <property type="term" value="F:metal ion binding"/>
    <property type="evidence" value="ECO:0007669"/>
    <property type="project" value="UniProtKB-KW"/>
</dbReference>
<dbReference type="GO" id="GO:0071555">
    <property type="term" value="P:cell wall organization"/>
    <property type="evidence" value="ECO:0007669"/>
    <property type="project" value="UniProtKB-KW"/>
</dbReference>
<dbReference type="GO" id="GO:0009252">
    <property type="term" value="P:peptidoglycan biosynthetic process"/>
    <property type="evidence" value="ECO:0007669"/>
    <property type="project" value="UniProtKB-UniRule"/>
</dbReference>
<dbReference type="GO" id="GO:0008360">
    <property type="term" value="P:regulation of cell shape"/>
    <property type="evidence" value="ECO:0007669"/>
    <property type="project" value="UniProtKB-KW"/>
</dbReference>
<dbReference type="Gene3D" id="3.40.50.20">
    <property type="match status" value="1"/>
</dbReference>
<dbReference type="Gene3D" id="3.30.1490.20">
    <property type="entry name" value="ATP-grasp fold, A domain"/>
    <property type="match status" value="1"/>
</dbReference>
<dbReference type="Gene3D" id="3.30.470.20">
    <property type="entry name" value="ATP-grasp fold, B domain"/>
    <property type="match status" value="1"/>
</dbReference>
<dbReference type="HAMAP" id="MF_00047">
    <property type="entry name" value="Dala_Dala_lig"/>
    <property type="match status" value="1"/>
</dbReference>
<dbReference type="InterPro" id="IPR011761">
    <property type="entry name" value="ATP-grasp"/>
</dbReference>
<dbReference type="InterPro" id="IPR013815">
    <property type="entry name" value="ATP_grasp_subdomain_1"/>
</dbReference>
<dbReference type="InterPro" id="IPR000291">
    <property type="entry name" value="D-Ala_lig_Van_CS"/>
</dbReference>
<dbReference type="InterPro" id="IPR005905">
    <property type="entry name" value="D_ala_D_ala"/>
</dbReference>
<dbReference type="InterPro" id="IPR011095">
    <property type="entry name" value="Dala_Dala_lig_C"/>
</dbReference>
<dbReference type="InterPro" id="IPR011127">
    <property type="entry name" value="Dala_Dala_lig_N"/>
</dbReference>
<dbReference type="InterPro" id="IPR016185">
    <property type="entry name" value="PreATP-grasp_dom_sf"/>
</dbReference>
<dbReference type="NCBIfam" id="TIGR01205">
    <property type="entry name" value="D_ala_D_alaTIGR"/>
    <property type="match status" value="1"/>
</dbReference>
<dbReference type="NCBIfam" id="NF002527">
    <property type="entry name" value="PRK01966.1-3"/>
    <property type="match status" value="1"/>
</dbReference>
<dbReference type="PANTHER" id="PTHR23132">
    <property type="entry name" value="D-ALANINE--D-ALANINE LIGASE"/>
    <property type="match status" value="1"/>
</dbReference>
<dbReference type="PANTHER" id="PTHR23132:SF23">
    <property type="entry name" value="D-ALANINE--D-ALANINE LIGASE B"/>
    <property type="match status" value="1"/>
</dbReference>
<dbReference type="Pfam" id="PF07478">
    <property type="entry name" value="Dala_Dala_lig_C"/>
    <property type="match status" value="1"/>
</dbReference>
<dbReference type="Pfam" id="PF01820">
    <property type="entry name" value="Dala_Dala_lig_N"/>
    <property type="match status" value="1"/>
</dbReference>
<dbReference type="SUPFAM" id="SSF56059">
    <property type="entry name" value="Glutathione synthetase ATP-binding domain-like"/>
    <property type="match status" value="1"/>
</dbReference>
<dbReference type="SUPFAM" id="SSF52440">
    <property type="entry name" value="PreATP-grasp domain"/>
    <property type="match status" value="1"/>
</dbReference>
<dbReference type="PROSITE" id="PS50975">
    <property type="entry name" value="ATP_GRASP"/>
    <property type="match status" value="1"/>
</dbReference>
<dbReference type="PROSITE" id="PS00843">
    <property type="entry name" value="DALA_DALA_LIGASE_1"/>
    <property type="match status" value="1"/>
</dbReference>
<dbReference type="PROSITE" id="PS00844">
    <property type="entry name" value="DALA_DALA_LIGASE_2"/>
    <property type="match status" value="1"/>
</dbReference>
<keyword id="KW-0067">ATP-binding</keyword>
<keyword id="KW-0133">Cell shape</keyword>
<keyword id="KW-0961">Cell wall biogenesis/degradation</keyword>
<keyword id="KW-0963">Cytoplasm</keyword>
<keyword id="KW-0436">Ligase</keyword>
<keyword id="KW-0460">Magnesium</keyword>
<keyword id="KW-0464">Manganese</keyword>
<keyword id="KW-0479">Metal-binding</keyword>
<keyword id="KW-0547">Nucleotide-binding</keyword>
<keyword id="KW-0573">Peptidoglycan synthesis</keyword>
<accession>Q17XZ1</accession>
<protein>
    <recommendedName>
        <fullName evidence="2">D-alanine--D-alanine ligase</fullName>
        <ecNumber evidence="2">6.3.2.4</ecNumber>
    </recommendedName>
    <alternativeName>
        <fullName evidence="2">D-Ala-D-Ala ligase</fullName>
    </alternativeName>
    <alternativeName>
        <fullName evidence="2">D-alanylalanine synthetase</fullName>
    </alternativeName>
</protein>
<feature type="chain" id="PRO_0000341108" description="D-alanine--D-alanine ligase">
    <location>
        <begin position="1"/>
        <end position="350"/>
    </location>
</feature>
<feature type="domain" description="ATP-grasp" evidence="2">
    <location>
        <begin position="135"/>
        <end position="335"/>
    </location>
</feature>
<feature type="binding site" evidence="2">
    <location>
        <begin position="164"/>
        <end position="219"/>
    </location>
    <ligand>
        <name>ATP</name>
        <dbReference type="ChEBI" id="CHEBI:30616"/>
    </ligand>
</feature>
<feature type="binding site" evidence="2">
    <location>
        <position position="291"/>
    </location>
    <ligand>
        <name>Mg(2+)</name>
        <dbReference type="ChEBI" id="CHEBI:18420"/>
        <label>1</label>
    </ligand>
</feature>
<feature type="binding site" evidence="2">
    <location>
        <position position="303"/>
    </location>
    <ligand>
        <name>Mg(2+)</name>
        <dbReference type="ChEBI" id="CHEBI:18420"/>
        <label>1</label>
    </ligand>
</feature>
<feature type="binding site" evidence="2">
    <location>
        <position position="303"/>
    </location>
    <ligand>
        <name>Mg(2+)</name>
        <dbReference type="ChEBI" id="CHEBI:18420"/>
        <label>2</label>
    </ligand>
</feature>
<feature type="binding site" evidence="2">
    <location>
        <position position="305"/>
    </location>
    <ligand>
        <name>Mg(2+)</name>
        <dbReference type="ChEBI" id="CHEBI:18420"/>
        <label>2</label>
    </ligand>
</feature>
<evidence type="ECO:0000250" key="1"/>
<evidence type="ECO:0000255" key="2">
    <source>
        <dbReference type="HAMAP-Rule" id="MF_00047"/>
    </source>
</evidence>